<keyword id="KW-0020">Allergen</keyword>
<keyword id="KW-0903">Direct protein sequencing</keyword>
<keyword id="KW-1015">Disulfide bond</keyword>
<keyword id="KW-0708">Seed storage protein</keyword>
<keyword id="KW-0758">Storage protein</keyword>
<organism>
    <name type="scientific">Brassica napus</name>
    <name type="common">Rape</name>
    <dbReference type="NCBI Taxonomy" id="3708"/>
    <lineage>
        <taxon>Eukaryota</taxon>
        <taxon>Viridiplantae</taxon>
        <taxon>Streptophyta</taxon>
        <taxon>Embryophyta</taxon>
        <taxon>Tracheophyta</taxon>
        <taxon>Spermatophyta</taxon>
        <taxon>Magnoliopsida</taxon>
        <taxon>eudicotyledons</taxon>
        <taxon>Gunneridae</taxon>
        <taxon>Pentapetalae</taxon>
        <taxon>rosids</taxon>
        <taxon>malvids</taxon>
        <taxon>Brassicales</taxon>
        <taxon>Brassicaceae</taxon>
        <taxon>Brassiceae</taxon>
        <taxon>Brassica</taxon>
    </lineage>
</organism>
<evidence type="ECO:0000250" key="1">
    <source>
        <dbReference type="UniProtKB" id="P24565"/>
    </source>
</evidence>
<evidence type="ECO:0000255" key="2"/>
<evidence type="ECO:0000269" key="3">
    <source>
    </source>
</evidence>
<evidence type="ECO:0000269" key="4">
    <source>
    </source>
</evidence>
<evidence type="ECO:0000303" key="5">
    <source>
    </source>
</evidence>
<evidence type="ECO:0000305" key="6"/>
<evidence type="ECO:0000312" key="7">
    <source>
        <dbReference type="PIR" id="S16183"/>
    </source>
</evidence>
<comment type="function">
    <text evidence="6">The small, basic, water-soluble napins are one of the two major kinds of storage proteins synthesized in the seed during its maturation.</text>
</comment>
<comment type="subunit">
    <text evidence="3 4">The mature protein consists of a small and a large chain linked by disulfide bonds.</text>
</comment>
<comment type="allergen">
    <text evidence="4">Causes an allergic reaction in human. Binds to IgE.</text>
</comment>
<comment type="similarity">
    <text evidence="2">Belongs to the 2S seed storage albumins family.</text>
</comment>
<name>2SS3_BRANA</name>
<protein>
    <recommendedName>
        <fullName>Napin-3</fullName>
    </recommendedName>
    <alternativeName>
        <fullName>1.7S seed storage protein</fullName>
    </alternativeName>
    <alternativeName>
        <fullName>Napin BnIII</fullName>
    </alternativeName>
    <alternativeName>
        <fullName>Napin nIII</fullName>
    </alternativeName>
    <component>
        <recommendedName>
            <fullName>Napin-3 small chain</fullName>
        </recommendedName>
    </component>
    <component>
        <recommendedName>
            <fullName>Napin-3 large chain</fullName>
        </recommendedName>
    </component>
</protein>
<dbReference type="PIR" id="S16183">
    <property type="entry name" value="S16183"/>
</dbReference>
<dbReference type="SMR" id="P80208"/>
<dbReference type="Allergome" id="169">
    <property type="allergen name" value="Bra n 1"/>
</dbReference>
<dbReference type="Allergome" id="3162">
    <property type="allergen name" value="Bra n 1.0101"/>
</dbReference>
<dbReference type="GO" id="GO:0045735">
    <property type="term" value="F:nutrient reservoir activity"/>
    <property type="evidence" value="ECO:0007669"/>
    <property type="project" value="UniProtKB-KW"/>
</dbReference>
<dbReference type="CDD" id="cd00261">
    <property type="entry name" value="AAI_SS"/>
    <property type="match status" value="1"/>
</dbReference>
<dbReference type="Gene3D" id="1.10.110.10">
    <property type="entry name" value="Plant lipid-transfer and hydrophobic proteins"/>
    <property type="match status" value="1"/>
</dbReference>
<dbReference type="InterPro" id="IPR036312">
    <property type="entry name" value="Bifun_inhib/LTP/seed_sf"/>
</dbReference>
<dbReference type="InterPro" id="IPR016140">
    <property type="entry name" value="Bifunc_inhib/LTP/seed_store"/>
</dbReference>
<dbReference type="InterPro" id="IPR000617">
    <property type="entry name" value="Napin/2SS/CON"/>
</dbReference>
<dbReference type="PANTHER" id="PTHR35496">
    <property type="entry name" value="2S SEED STORAGE PROTEIN 1-RELATED"/>
    <property type="match status" value="1"/>
</dbReference>
<dbReference type="PANTHER" id="PTHR35496:SF20">
    <property type="entry name" value="2S SEED STORAGE PROTEIN 1-RELATED"/>
    <property type="match status" value="1"/>
</dbReference>
<dbReference type="Pfam" id="PF00234">
    <property type="entry name" value="Tryp_alpha_amyl"/>
    <property type="match status" value="1"/>
</dbReference>
<dbReference type="PRINTS" id="PR00496">
    <property type="entry name" value="NAPIN"/>
</dbReference>
<dbReference type="SMART" id="SM00499">
    <property type="entry name" value="AAI"/>
    <property type="match status" value="1"/>
</dbReference>
<dbReference type="SUPFAM" id="SSF47699">
    <property type="entry name" value="Bifunctional inhibitor/lipid-transfer protein/seed storage 2S albumin"/>
    <property type="match status" value="1"/>
</dbReference>
<accession>P80208</accession>
<sequence length="125" mass="14035">SAGPFRIPKCRKEFQQAQHLRACQQWLHKQAMQSGSGPQGPQQRPPLLQQCCNELHQEEPLCVCPTLKGASRAVKQQVRQQQGQQGQQLQQVISRIYQTATHLPKVCNIPQVSVCPFQKTMPGPS</sequence>
<reference evidence="6" key="1">
    <citation type="journal article" date="1997" name="Clin. Exp. Allergy">
        <title>Detection, isolation and complete amino acid sequence of an aeroallergenic protein from rapeseed flour.</title>
        <authorList>
            <person name="Monsalve R.I."/>
            <person name="Gonzalez de la Pena M.A."/>
            <person name="Lopez-Otin C."/>
            <person name="Fiandor A."/>
            <person name="Fernandez C."/>
            <person name="Villalba M."/>
            <person name="Rodriguez R."/>
        </authorList>
    </citation>
    <scope>PROTEIN SEQUENCE</scope>
    <scope>SUBUNIT</scope>
    <scope>ALLERGEN</scope>
    <source>
        <tissue evidence="4">Seed</tissue>
    </source>
</reference>
<reference evidence="7" key="2">
    <citation type="journal article" date="1991" name="Biochim. Biophys. Acta">
        <title>Structural analysis of the small chain of the 2S albumin, napin nIII, from rapeseed. Chemical and spectroscopic evidence of an intramolecular bond formation.</title>
        <authorList>
            <person name="Monsalve R.I."/>
            <person name="Villalba M."/>
            <person name="Lopez-Otin C."/>
            <person name="Rodriguez R."/>
        </authorList>
    </citation>
    <scope>PROTEIN SEQUENCE OF 1-37</scope>
    <scope>SUBUNIT</scope>
    <source>
        <tissue evidence="3">Seed</tissue>
    </source>
</reference>
<proteinExistence type="evidence at protein level"/>
<feature type="chain" id="PRO_0000239459" description="Napin-3 small chain">
    <location>
        <begin position="1"/>
        <end position="37"/>
    </location>
</feature>
<feature type="chain" id="PRO_0000239460" description="Napin-3 large chain">
    <location>
        <begin position="38"/>
        <end position="125"/>
    </location>
</feature>
<feature type="disulfide bond" description="Interchain (between small and large chains)" evidence="1">
    <location>
        <begin position="10"/>
        <end position="62"/>
    </location>
</feature>
<feature type="disulfide bond" description="Interchain (between small and large chains)" evidence="1">
    <location>
        <begin position="23"/>
        <end position="51"/>
    </location>
</feature>
<feature type="disulfide bond" evidence="1">
    <location>
        <begin position="52"/>
        <end position="107"/>
    </location>
</feature>
<feature type="disulfide bond" evidence="1">
    <location>
        <begin position="64"/>
        <end position="115"/>
    </location>
</feature>
<feature type="non-consecutive residues" evidence="5">
    <location>
        <begin position="37"/>
        <end position="38"/>
    </location>
</feature>